<name>RNH2_STRU0</name>
<organism>
    <name type="scientific">Streptococcus uberis (strain ATCC BAA-854 / 0140J)</name>
    <dbReference type="NCBI Taxonomy" id="218495"/>
    <lineage>
        <taxon>Bacteria</taxon>
        <taxon>Bacillati</taxon>
        <taxon>Bacillota</taxon>
        <taxon>Bacilli</taxon>
        <taxon>Lactobacillales</taxon>
        <taxon>Streptococcaceae</taxon>
        <taxon>Streptococcus</taxon>
    </lineage>
</organism>
<dbReference type="EC" id="3.1.26.4" evidence="1"/>
<dbReference type="EMBL" id="AM946015">
    <property type="protein sequence ID" value="CAR42059.1"/>
    <property type="molecule type" value="Genomic_DNA"/>
</dbReference>
<dbReference type="RefSeq" id="WP_012658427.1">
    <property type="nucleotide sequence ID" value="NC_012004.1"/>
</dbReference>
<dbReference type="SMR" id="B9DS69"/>
<dbReference type="STRING" id="218495.SUB0928"/>
<dbReference type="KEGG" id="sub:SUB0928"/>
<dbReference type="eggNOG" id="COG0164">
    <property type="taxonomic scope" value="Bacteria"/>
</dbReference>
<dbReference type="HOGENOM" id="CLU_036532_2_1_9"/>
<dbReference type="OrthoDB" id="9803420at2"/>
<dbReference type="Proteomes" id="UP000000449">
    <property type="component" value="Chromosome"/>
</dbReference>
<dbReference type="GO" id="GO:0005737">
    <property type="term" value="C:cytoplasm"/>
    <property type="evidence" value="ECO:0007669"/>
    <property type="project" value="UniProtKB-SubCell"/>
</dbReference>
<dbReference type="GO" id="GO:0032299">
    <property type="term" value="C:ribonuclease H2 complex"/>
    <property type="evidence" value="ECO:0007669"/>
    <property type="project" value="TreeGrafter"/>
</dbReference>
<dbReference type="GO" id="GO:0030145">
    <property type="term" value="F:manganese ion binding"/>
    <property type="evidence" value="ECO:0007669"/>
    <property type="project" value="UniProtKB-UniRule"/>
</dbReference>
<dbReference type="GO" id="GO:0003723">
    <property type="term" value="F:RNA binding"/>
    <property type="evidence" value="ECO:0007669"/>
    <property type="project" value="InterPro"/>
</dbReference>
<dbReference type="GO" id="GO:0004523">
    <property type="term" value="F:RNA-DNA hybrid ribonuclease activity"/>
    <property type="evidence" value="ECO:0007669"/>
    <property type="project" value="UniProtKB-UniRule"/>
</dbReference>
<dbReference type="GO" id="GO:0043137">
    <property type="term" value="P:DNA replication, removal of RNA primer"/>
    <property type="evidence" value="ECO:0007669"/>
    <property type="project" value="TreeGrafter"/>
</dbReference>
<dbReference type="GO" id="GO:0006298">
    <property type="term" value="P:mismatch repair"/>
    <property type="evidence" value="ECO:0007669"/>
    <property type="project" value="TreeGrafter"/>
</dbReference>
<dbReference type="CDD" id="cd07182">
    <property type="entry name" value="RNase_HII_bacteria_HII_like"/>
    <property type="match status" value="1"/>
</dbReference>
<dbReference type="FunFam" id="3.30.420.10:FF:000006">
    <property type="entry name" value="Ribonuclease HII"/>
    <property type="match status" value="1"/>
</dbReference>
<dbReference type="Gene3D" id="3.30.420.10">
    <property type="entry name" value="Ribonuclease H-like superfamily/Ribonuclease H"/>
    <property type="match status" value="1"/>
</dbReference>
<dbReference type="HAMAP" id="MF_00052_B">
    <property type="entry name" value="RNase_HII_B"/>
    <property type="match status" value="1"/>
</dbReference>
<dbReference type="InterPro" id="IPR022898">
    <property type="entry name" value="RNase_HII"/>
</dbReference>
<dbReference type="InterPro" id="IPR001352">
    <property type="entry name" value="RNase_HII/HIII"/>
</dbReference>
<dbReference type="InterPro" id="IPR024567">
    <property type="entry name" value="RNase_HII/HIII_dom"/>
</dbReference>
<dbReference type="InterPro" id="IPR012337">
    <property type="entry name" value="RNaseH-like_sf"/>
</dbReference>
<dbReference type="InterPro" id="IPR036397">
    <property type="entry name" value="RNaseH_sf"/>
</dbReference>
<dbReference type="NCBIfam" id="NF000594">
    <property type="entry name" value="PRK00015.1-1"/>
    <property type="match status" value="1"/>
</dbReference>
<dbReference type="NCBIfam" id="NF000595">
    <property type="entry name" value="PRK00015.1-3"/>
    <property type="match status" value="1"/>
</dbReference>
<dbReference type="PANTHER" id="PTHR10954">
    <property type="entry name" value="RIBONUCLEASE H2 SUBUNIT A"/>
    <property type="match status" value="1"/>
</dbReference>
<dbReference type="PANTHER" id="PTHR10954:SF18">
    <property type="entry name" value="RIBONUCLEASE HII"/>
    <property type="match status" value="1"/>
</dbReference>
<dbReference type="Pfam" id="PF01351">
    <property type="entry name" value="RNase_HII"/>
    <property type="match status" value="1"/>
</dbReference>
<dbReference type="SUPFAM" id="SSF53098">
    <property type="entry name" value="Ribonuclease H-like"/>
    <property type="match status" value="1"/>
</dbReference>
<dbReference type="PROSITE" id="PS51975">
    <property type="entry name" value="RNASE_H_2"/>
    <property type="match status" value="1"/>
</dbReference>
<proteinExistence type="inferred from homology"/>
<evidence type="ECO:0000255" key="1">
    <source>
        <dbReference type="HAMAP-Rule" id="MF_00052"/>
    </source>
</evidence>
<evidence type="ECO:0000255" key="2">
    <source>
        <dbReference type="PROSITE-ProRule" id="PRU01319"/>
    </source>
</evidence>
<comment type="function">
    <text evidence="1">Endonuclease that specifically degrades the RNA of RNA-DNA hybrids.</text>
</comment>
<comment type="catalytic activity">
    <reaction evidence="1">
        <text>Endonucleolytic cleavage to 5'-phosphomonoester.</text>
        <dbReference type="EC" id="3.1.26.4"/>
    </reaction>
</comment>
<comment type="cofactor">
    <cofactor evidence="1">
        <name>Mn(2+)</name>
        <dbReference type="ChEBI" id="CHEBI:29035"/>
    </cofactor>
    <cofactor evidence="1">
        <name>Mg(2+)</name>
        <dbReference type="ChEBI" id="CHEBI:18420"/>
    </cofactor>
    <text evidence="1">Manganese or magnesium. Binds 1 divalent metal ion per monomer in the absence of substrate. May bind a second metal ion after substrate binding.</text>
</comment>
<comment type="subcellular location">
    <subcellularLocation>
        <location evidence="1">Cytoplasm</location>
    </subcellularLocation>
</comment>
<comment type="similarity">
    <text evidence="1">Belongs to the RNase HII family.</text>
</comment>
<accession>B9DS69</accession>
<reference key="1">
    <citation type="journal article" date="2009" name="BMC Genomics">
        <title>Evidence for niche adaptation in the genome of the bovine pathogen Streptococcus uberis.</title>
        <authorList>
            <person name="Ward P.N."/>
            <person name="Holden M.T.G."/>
            <person name="Leigh J.A."/>
            <person name="Lennard N."/>
            <person name="Bignell A."/>
            <person name="Barron A."/>
            <person name="Clark L."/>
            <person name="Quail M.A."/>
            <person name="Woodward J."/>
            <person name="Barrell B.G."/>
            <person name="Egan S.A."/>
            <person name="Field T.R."/>
            <person name="Maskell D."/>
            <person name="Kehoe M."/>
            <person name="Dowson C.G."/>
            <person name="Chanter N."/>
            <person name="Whatmore A.M."/>
            <person name="Bentley S.D."/>
            <person name="Parkhill J."/>
        </authorList>
    </citation>
    <scope>NUCLEOTIDE SEQUENCE [LARGE SCALE GENOMIC DNA]</scope>
    <source>
        <strain>ATCC BAA-854 / 0140J</strain>
    </source>
</reference>
<sequence length="257" mass="28366">MTKTIKEINRLLEAISELSDPYFIELESDDRVGVKKAVNKRRKAIQAMVDEELRLDKMLSYEKVLYQEGFSLIAGIDEVGRGPLAGPVVAACVILPIDCKIKGLNDSKKIPKSKHLSIFQAIQERALGIGIGIVDNHVIDDINIYQATKVAMIEAIKNIKGDVTEPDYLLIDAMTLETPIPQQSIIKGDANSMSIAAASIVAKVTRDRLMMDYEKAFPGYDFAKNAGYGTTSHLNGLKQFGVTPIHRTSFEPIKSML</sequence>
<gene>
    <name evidence="1" type="primary">rnhB</name>
    <name type="ordered locus">SUB0928</name>
</gene>
<feature type="chain" id="PRO_1000117688" description="Ribonuclease HII">
    <location>
        <begin position="1"/>
        <end position="257"/>
    </location>
</feature>
<feature type="domain" description="RNase H type-2" evidence="2">
    <location>
        <begin position="71"/>
        <end position="257"/>
    </location>
</feature>
<feature type="binding site" evidence="1">
    <location>
        <position position="77"/>
    </location>
    <ligand>
        <name>a divalent metal cation</name>
        <dbReference type="ChEBI" id="CHEBI:60240"/>
    </ligand>
</feature>
<feature type="binding site" evidence="1">
    <location>
        <position position="78"/>
    </location>
    <ligand>
        <name>a divalent metal cation</name>
        <dbReference type="ChEBI" id="CHEBI:60240"/>
    </ligand>
</feature>
<feature type="binding site" evidence="1">
    <location>
        <position position="172"/>
    </location>
    <ligand>
        <name>a divalent metal cation</name>
        <dbReference type="ChEBI" id="CHEBI:60240"/>
    </ligand>
</feature>
<keyword id="KW-0963">Cytoplasm</keyword>
<keyword id="KW-0255">Endonuclease</keyword>
<keyword id="KW-0378">Hydrolase</keyword>
<keyword id="KW-0464">Manganese</keyword>
<keyword id="KW-0479">Metal-binding</keyword>
<keyword id="KW-0540">Nuclease</keyword>
<keyword id="KW-1185">Reference proteome</keyword>
<protein>
    <recommendedName>
        <fullName evidence="1">Ribonuclease HII</fullName>
        <shortName evidence="1">RNase HII</shortName>
        <ecNumber evidence="1">3.1.26.4</ecNumber>
    </recommendedName>
</protein>